<name>YBEY_RICRS</name>
<evidence type="ECO:0000255" key="1">
    <source>
        <dbReference type="HAMAP-Rule" id="MF_00009"/>
    </source>
</evidence>
<gene>
    <name evidence="1" type="primary">ybeY</name>
    <name type="ordered locus">A1G_06285</name>
</gene>
<protein>
    <recommendedName>
        <fullName evidence="1">Endoribonuclease YbeY</fullName>
        <ecNumber evidence="1">3.1.-.-</ecNumber>
    </recommendedName>
</protein>
<feature type="chain" id="PRO_1000000739" description="Endoribonuclease YbeY">
    <location>
        <begin position="1"/>
        <end position="167"/>
    </location>
</feature>
<feature type="binding site" evidence="1">
    <location>
        <position position="131"/>
    </location>
    <ligand>
        <name>Zn(2+)</name>
        <dbReference type="ChEBI" id="CHEBI:29105"/>
        <note>catalytic</note>
    </ligand>
</feature>
<feature type="binding site" evidence="1">
    <location>
        <position position="135"/>
    </location>
    <ligand>
        <name>Zn(2+)</name>
        <dbReference type="ChEBI" id="CHEBI:29105"/>
        <note>catalytic</note>
    </ligand>
</feature>
<feature type="binding site" evidence="1">
    <location>
        <position position="141"/>
    </location>
    <ligand>
        <name>Zn(2+)</name>
        <dbReference type="ChEBI" id="CHEBI:29105"/>
        <note>catalytic</note>
    </ligand>
</feature>
<comment type="function">
    <text evidence="1">Single strand-specific metallo-endoribonuclease involved in late-stage 70S ribosome quality control and in maturation of the 3' terminus of the 16S rRNA.</text>
</comment>
<comment type="cofactor">
    <cofactor evidence="1">
        <name>Zn(2+)</name>
        <dbReference type="ChEBI" id="CHEBI:29105"/>
    </cofactor>
    <text evidence="1">Binds 1 zinc ion.</text>
</comment>
<comment type="subcellular location">
    <subcellularLocation>
        <location evidence="1">Cytoplasm</location>
    </subcellularLocation>
</comment>
<comment type="similarity">
    <text evidence="1">Belongs to the endoribonuclease YbeY family.</text>
</comment>
<proteinExistence type="inferred from homology"/>
<sequence>MINVEIVRHYNKWREHKQINKSLIKKITQNILLRFDNFSKIKQFELSILLTNAAEILILNKQFRNIEKATNVLSFPSNELNWQDLYSKLEFLGDSDYMHLGDIAFCYEVIYNESCEQYKTFENHFIHLLIHSILHLIGFDHQNDTEANIMENLEIEILSYFGIFPPY</sequence>
<organism>
    <name type="scientific">Rickettsia rickettsii (strain Sheila Smith)</name>
    <dbReference type="NCBI Taxonomy" id="392021"/>
    <lineage>
        <taxon>Bacteria</taxon>
        <taxon>Pseudomonadati</taxon>
        <taxon>Pseudomonadota</taxon>
        <taxon>Alphaproteobacteria</taxon>
        <taxon>Rickettsiales</taxon>
        <taxon>Rickettsiaceae</taxon>
        <taxon>Rickettsieae</taxon>
        <taxon>Rickettsia</taxon>
        <taxon>spotted fever group</taxon>
    </lineage>
</organism>
<keyword id="KW-0963">Cytoplasm</keyword>
<keyword id="KW-0255">Endonuclease</keyword>
<keyword id="KW-0378">Hydrolase</keyword>
<keyword id="KW-0479">Metal-binding</keyword>
<keyword id="KW-0540">Nuclease</keyword>
<keyword id="KW-0690">Ribosome biogenesis</keyword>
<keyword id="KW-0698">rRNA processing</keyword>
<keyword id="KW-0862">Zinc</keyword>
<reference key="1">
    <citation type="submission" date="2007-09" db="EMBL/GenBank/DDBJ databases">
        <title>Complete genome sequence of Rickettsia rickettsii.</title>
        <authorList>
            <person name="Madan A."/>
            <person name="Fahey J."/>
            <person name="Helton E."/>
            <person name="Ketteman M."/>
            <person name="Madan A."/>
            <person name="Rodrigues S."/>
            <person name="Sanchez A."/>
            <person name="Dasch G."/>
            <person name="Eremeeva M."/>
        </authorList>
    </citation>
    <scope>NUCLEOTIDE SEQUENCE [LARGE SCALE GENOMIC DNA]</scope>
    <source>
        <strain>Sheila Smith</strain>
    </source>
</reference>
<accession>A8GTI5</accession>
<dbReference type="EC" id="3.1.-.-" evidence="1"/>
<dbReference type="EMBL" id="CP000848">
    <property type="protein sequence ID" value="ABV76710.1"/>
    <property type="molecule type" value="Genomic_DNA"/>
</dbReference>
<dbReference type="RefSeq" id="WP_012151260.1">
    <property type="nucleotide sequence ID" value="NZ_CP121767.1"/>
</dbReference>
<dbReference type="SMR" id="A8GTI5"/>
<dbReference type="GeneID" id="79937769"/>
<dbReference type="KEGG" id="rri:A1G_06285"/>
<dbReference type="HOGENOM" id="CLU_106710_0_0_5"/>
<dbReference type="Proteomes" id="UP000006832">
    <property type="component" value="Chromosome"/>
</dbReference>
<dbReference type="GO" id="GO:0005737">
    <property type="term" value="C:cytoplasm"/>
    <property type="evidence" value="ECO:0007669"/>
    <property type="project" value="UniProtKB-SubCell"/>
</dbReference>
<dbReference type="GO" id="GO:0004222">
    <property type="term" value="F:metalloendopeptidase activity"/>
    <property type="evidence" value="ECO:0007669"/>
    <property type="project" value="InterPro"/>
</dbReference>
<dbReference type="GO" id="GO:0004521">
    <property type="term" value="F:RNA endonuclease activity"/>
    <property type="evidence" value="ECO:0007669"/>
    <property type="project" value="UniProtKB-UniRule"/>
</dbReference>
<dbReference type="GO" id="GO:0008270">
    <property type="term" value="F:zinc ion binding"/>
    <property type="evidence" value="ECO:0007669"/>
    <property type="project" value="UniProtKB-UniRule"/>
</dbReference>
<dbReference type="GO" id="GO:0006364">
    <property type="term" value="P:rRNA processing"/>
    <property type="evidence" value="ECO:0007669"/>
    <property type="project" value="UniProtKB-UniRule"/>
</dbReference>
<dbReference type="Gene3D" id="3.40.390.30">
    <property type="entry name" value="Metalloproteases ('zincins'), catalytic domain"/>
    <property type="match status" value="1"/>
</dbReference>
<dbReference type="HAMAP" id="MF_00009">
    <property type="entry name" value="Endoribonucl_YbeY"/>
    <property type="match status" value="1"/>
</dbReference>
<dbReference type="InterPro" id="IPR023091">
    <property type="entry name" value="MetalPrtase_cat_dom_sf_prd"/>
</dbReference>
<dbReference type="InterPro" id="IPR002036">
    <property type="entry name" value="YbeY"/>
</dbReference>
<dbReference type="InterPro" id="IPR020549">
    <property type="entry name" value="YbeY_CS"/>
</dbReference>
<dbReference type="NCBIfam" id="TIGR00043">
    <property type="entry name" value="rRNA maturation RNase YbeY"/>
    <property type="match status" value="1"/>
</dbReference>
<dbReference type="PANTHER" id="PTHR46986">
    <property type="entry name" value="ENDORIBONUCLEASE YBEY, CHLOROPLASTIC"/>
    <property type="match status" value="1"/>
</dbReference>
<dbReference type="PANTHER" id="PTHR46986:SF1">
    <property type="entry name" value="ENDORIBONUCLEASE YBEY, CHLOROPLASTIC"/>
    <property type="match status" value="1"/>
</dbReference>
<dbReference type="Pfam" id="PF02130">
    <property type="entry name" value="YbeY"/>
    <property type="match status" value="1"/>
</dbReference>
<dbReference type="SUPFAM" id="SSF55486">
    <property type="entry name" value="Metalloproteases ('zincins'), catalytic domain"/>
    <property type="match status" value="1"/>
</dbReference>
<dbReference type="PROSITE" id="PS01306">
    <property type="entry name" value="UPF0054"/>
    <property type="match status" value="1"/>
</dbReference>